<protein>
    <recommendedName>
        <fullName evidence="6">Pentatricopeptide repeat-containing protein OGR1, mitochondrial</fullName>
    </recommendedName>
    <alternativeName>
        <fullName evidence="5">Protein OPAQUE AND GROWTH RETARDATION 1</fullName>
    </alternativeName>
</protein>
<reference key="1">
    <citation type="journal article" date="2009" name="Plant J.">
        <title>Rice OGR1 encodes a pentatricopeptide repeat-DYW protein and is essential for RNA editing in mitochondria.</title>
        <authorList>
            <person name="Kim S.R."/>
            <person name="Yang J.I."/>
            <person name="Moon S."/>
            <person name="Ryu C.H."/>
            <person name="An K."/>
            <person name="Kim K.M."/>
            <person name="Yim J."/>
            <person name="An G."/>
        </authorList>
    </citation>
    <scope>NUCLEOTIDE SEQUENCE [GENOMIC DNA]</scope>
    <scope>FUNCTION</scope>
    <scope>SUBCELLULAR LOCATION</scope>
    <scope>DISRUPTION PHENOTYPE</scope>
</reference>
<reference key="2">
    <citation type="journal article" date="2005" name="BMC Biol.">
        <title>The sequence of rice chromosomes 11 and 12, rich in disease resistance genes and recent gene duplications.</title>
        <authorList>
            <consortium name="The rice chromosomes 11 and 12 sequencing consortia"/>
        </authorList>
    </citation>
    <scope>NUCLEOTIDE SEQUENCE [LARGE SCALE GENOMIC DNA]</scope>
    <source>
        <strain>cv. Nipponbare</strain>
    </source>
</reference>
<reference key="3">
    <citation type="journal article" date="2005" name="Nature">
        <title>The map-based sequence of the rice genome.</title>
        <authorList>
            <consortium name="International rice genome sequencing project (IRGSP)"/>
        </authorList>
    </citation>
    <scope>NUCLEOTIDE SEQUENCE [LARGE SCALE GENOMIC DNA]</scope>
    <source>
        <strain>cv. Nipponbare</strain>
    </source>
</reference>
<reference key="4">
    <citation type="journal article" date="2008" name="Nucleic Acids Res.">
        <title>The rice annotation project database (RAP-DB): 2008 update.</title>
        <authorList>
            <consortium name="The rice annotation project (RAP)"/>
        </authorList>
    </citation>
    <scope>GENOME REANNOTATION</scope>
    <source>
        <strain>cv. Nipponbare</strain>
    </source>
</reference>
<reference key="5">
    <citation type="journal article" date="2013" name="Rice">
        <title>Improvement of the Oryza sativa Nipponbare reference genome using next generation sequence and optical map data.</title>
        <authorList>
            <person name="Kawahara Y."/>
            <person name="de la Bastide M."/>
            <person name="Hamilton J.P."/>
            <person name="Kanamori H."/>
            <person name="McCombie W.R."/>
            <person name="Ouyang S."/>
            <person name="Schwartz D.C."/>
            <person name="Tanaka T."/>
            <person name="Wu J."/>
            <person name="Zhou S."/>
            <person name="Childs K.L."/>
            <person name="Davidson R.M."/>
            <person name="Lin H."/>
            <person name="Quesada-Ocampo L."/>
            <person name="Vaillancourt B."/>
            <person name="Sakai H."/>
            <person name="Lee S.S."/>
            <person name="Kim J."/>
            <person name="Numa H."/>
            <person name="Itoh T."/>
            <person name="Buell C.R."/>
            <person name="Matsumoto T."/>
        </authorList>
    </citation>
    <scope>GENOME REANNOTATION</scope>
    <source>
        <strain>cv. Nipponbare</strain>
    </source>
</reference>
<reference key="6">
    <citation type="submission" date="2006-10" db="EMBL/GenBank/DDBJ databases">
        <title>Oryza sativa full length cDNA.</title>
        <authorList>
            <consortium name="The rice full-length cDNA consortium"/>
        </authorList>
    </citation>
    <scope>NUCLEOTIDE SEQUENCE [LARGE SCALE MRNA]</scope>
    <source>
        <strain>cv. Nipponbare</strain>
    </source>
</reference>
<proteinExistence type="evidence at transcript level"/>
<feature type="transit peptide" description="Mitochondrion" evidence="2">
    <location>
        <begin position="1"/>
        <end position="30"/>
    </location>
</feature>
<feature type="chain" id="PRO_0000433269" description="Pentatricopeptide repeat-containing protein OGR1, mitochondrial" evidence="2">
    <location>
        <begin position="31"/>
        <end position="587"/>
    </location>
</feature>
<feature type="repeat" description="PPR 1" evidence="3">
    <location>
        <begin position="145"/>
        <end position="179"/>
    </location>
</feature>
<feature type="repeat" description="PPR 2" evidence="3">
    <location>
        <begin position="200"/>
        <end position="203"/>
    </location>
</feature>
<feature type="repeat" description="PPR 3" evidence="3">
    <location>
        <begin position="217"/>
        <end position="251"/>
    </location>
</feature>
<feature type="repeat" description="PPR 4" evidence="3">
    <location>
        <begin position="252"/>
        <end position="286"/>
    </location>
</feature>
<feature type="repeat" description="PPR 5" evidence="3">
    <location>
        <begin position="287"/>
        <end position="315"/>
    </location>
</feature>
<feature type="repeat" description="PPR 6" evidence="3">
    <location>
        <begin position="319"/>
        <end position="349"/>
    </location>
</feature>
<feature type="repeat" description="PPR 7" evidence="3">
    <location>
        <begin position="351"/>
        <end position="381"/>
    </location>
</feature>
<feature type="repeat" description="PPR 8" evidence="3">
    <location>
        <begin position="383"/>
        <end position="417"/>
    </location>
</feature>
<feature type="region of interest" description="Type E motif" evidence="1">
    <location>
        <begin position="386"/>
        <end position="461"/>
    </location>
</feature>
<feature type="region of interest" description="Type E(+) motif" evidence="1">
    <location>
        <begin position="462"/>
        <end position="492"/>
    </location>
</feature>
<feature type="region of interest" description="Type DYW motif" evidence="1">
    <location>
        <begin position="493"/>
        <end position="587"/>
    </location>
</feature>
<feature type="sequence conflict" description="In Ref. 1; ACL79585." evidence="6" ref="1">
    <original>MSVS</original>
    <variation>MSVSAA</variation>
    <location>
        <begin position="1"/>
        <end position="4"/>
    </location>
</feature>
<feature type="sequence conflict" description="In Ref. 1; ACL79585." evidence="6" ref="1">
    <original>A</original>
    <variation>V</variation>
    <location>
        <position position="224"/>
    </location>
</feature>
<feature type="sequence conflict" description="In Ref. 1; ACL79585." evidence="6" ref="1">
    <original>R</original>
    <variation>K</variation>
    <location>
        <position position="246"/>
    </location>
</feature>
<feature type="sequence conflict" description="In Ref. 1; ACL79585." evidence="6" ref="1">
    <original>Q</original>
    <variation>R</variation>
    <location>
        <position position="284"/>
    </location>
</feature>
<name>OGR1_ORYSJ</name>
<accession>B8YEK4</accession>
<accession>A0A0P0Y8V1</accession>
<accession>B8YEK3</accession>
<accession>Q0INZ9</accession>
<accession>Q2QU89</accession>
<evidence type="ECO:0000250" key="1">
    <source>
        <dbReference type="UniProtKB" id="Q7Y211"/>
    </source>
</evidence>
<evidence type="ECO:0000255" key="2"/>
<evidence type="ECO:0000255" key="3">
    <source>
        <dbReference type="PROSITE-ProRule" id="PRU00708"/>
    </source>
</evidence>
<evidence type="ECO:0000269" key="4">
    <source>
    </source>
</evidence>
<evidence type="ECO:0000303" key="5">
    <source>
    </source>
</evidence>
<evidence type="ECO:0000305" key="6"/>
<evidence type="ECO:0000312" key="7">
    <source>
        <dbReference type="EMBL" id="ABA97375.1"/>
    </source>
</evidence>
<evidence type="ECO:0000312" key="8">
    <source>
        <dbReference type="EMBL" id="BAF29566.2"/>
    </source>
</evidence>
<organism>
    <name type="scientific">Oryza sativa subsp. japonica</name>
    <name type="common">Rice</name>
    <dbReference type="NCBI Taxonomy" id="39947"/>
    <lineage>
        <taxon>Eukaryota</taxon>
        <taxon>Viridiplantae</taxon>
        <taxon>Streptophyta</taxon>
        <taxon>Embryophyta</taxon>
        <taxon>Tracheophyta</taxon>
        <taxon>Spermatophyta</taxon>
        <taxon>Magnoliopsida</taxon>
        <taxon>Liliopsida</taxon>
        <taxon>Poales</taxon>
        <taxon>Poaceae</taxon>
        <taxon>BOP clade</taxon>
        <taxon>Oryzoideae</taxon>
        <taxon>Oryzeae</taxon>
        <taxon>Oryzinae</taxon>
        <taxon>Oryza</taxon>
        <taxon>Oryza sativa</taxon>
    </lineage>
</organism>
<keyword id="KW-0496">Mitochondrion</keyword>
<keyword id="KW-0507">mRNA processing</keyword>
<keyword id="KW-1185">Reference proteome</keyword>
<keyword id="KW-0677">Repeat</keyword>
<keyword id="KW-0809">Transit peptide</keyword>
<dbReference type="EMBL" id="FJ527826">
    <property type="protein sequence ID" value="ACL79585.1"/>
    <property type="molecule type" value="Genomic_DNA"/>
</dbReference>
<dbReference type="EMBL" id="FJ527827">
    <property type="protein sequence ID" value="ACL79586.1"/>
    <property type="molecule type" value="Genomic_DNA"/>
</dbReference>
<dbReference type="EMBL" id="AL928779">
    <property type="status" value="NOT_ANNOTATED_CDS"/>
    <property type="molecule type" value="Genomic_DNA"/>
</dbReference>
<dbReference type="EMBL" id="DP000011">
    <property type="protein sequence ID" value="ABA97375.1"/>
    <property type="status" value="ALT_SEQ"/>
    <property type="molecule type" value="Genomic_DNA"/>
</dbReference>
<dbReference type="EMBL" id="AP008218">
    <property type="protein sequence ID" value="BAF29566.2"/>
    <property type="status" value="ALT_SEQ"/>
    <property type="molecule type" value="Genomic_DNA"/>
</dbReference>
<dbReference type="EMBL" id="AP014968">
    <property type="protein sequence ID" value="BAT16644.1"/>
    <property type="molecule type" value="Genomic_DNA"/>
</dbReference>
<dbReference type="EMBL" id="AK242641">
    <property type="status" value="NOT_ANNOTATED_CDS"/>
    <property type="molecule type" value="mRNA"/>
</dbReference>
<dbReference type="RefSeq" id="XP_015619829.1">
    <property type="nucleotide sequence ID" value="XM_015764343.1"/>
</dbReference>
<dbReference type="RefSeq" id="XP_015619830.1">
    <property type="nucleotide sequence ID" value="XM_015764344.1"/>
</dbReference>
<dbReference type="RefSeq" id="XP_015619831.1">
    <property type="nucleotide sequence ID" value="XM_015764345.1"/>
</dbReference>
<dbReference type="RefSeq" id="XP_015619832.1">
    <property type="nucleotide sequence ID" value="XM_015764346.1"/>
</dbReference>
<dbReference type="RefSeq" id="XP_015619833.1">
    <property type="nucleotide sequence ID" value="XM_015764347.1"/>
</dbReference>
<dbReference type="SMR" id="B8YEK4"/>
<dbReference type="FunCoup" id="B8YEK4">
    <property type="interactions" value="353"/>
</dbReference>
<dbReference type="STRING" id="39947.B8YEK4"/>
<dbReference type="TCDB" id="9.A.14.13.50">
    <property type="family name" value="the g-protein-coupled receptor (gpcr) family"/>
</dbReference>
<dbReference type="PaxDb" id="39947-B8YEK4"/>
<dbReference type="EnsemblPlants" id="Os12t0270200-01">
    <property type="protein sequence ID" value="Os12t0270200-01"/>
    <property type="gene ID" value="Os12g0270200"/>
</dbReference>
<dbReference type="Gramene" id="Os12t0270200-01">
    <property type="protein sequence ID" value="Os12t0270200-01"/>
    <property type="gene ID" value="Os12g0270200"/>
</dbReference>
<dbReference type="KEGG" id="dosa:Os12g0270200"/>
<dbReference type="eggNOG" id="KOG4197">
    <property type="taxonomic scope" value="Eukaryota"/>
</dbReference>
<dbReference type="HOGENOM" id="CLU_002706_37_1_1"/>
<dbReference type="InParanoid" id="B8YEK4"/>
<dbReference type="OMA" id="ASKARWM"/>
<dbReference type="OrthoDB" id="185373at2759"/>
<dbReference type="Proteomes" id="UP000000763">
    <property type="component" value="Chromosome 12"/>
</dbReference>
<dbReference type="Proteomes" id="UP000059680">
    <property type="component" value="Chromosome 12"/>
</dbReference>
<dbReference type="GO" id="GO:0005739">
    <property type="term" value="C:mitochondrion"/>
    <property type="evidence" value="ECO:0000314"/>
    <property type="project" value="UniProtKB"/>
</dbReference>
<dbReference type="GO" id="GO:0003723">
    <property type="term" value="F:RNA binding"/>
    <property type="evidence" value="ECO:0007669"/>
    <property type="project" value="InterPro"/>
</dbReference>
<dbReference type="GO" id="GO:0008270">
    <property type="term" value="F:zinc ion binding"/>
    <property type="evidence" value="ECO:0007669"/>
    <property type="project" value="InterPro"/>
</dbReference>
<dbReference type="GO" id="GO:0080156">
    <property type="term" value="P:mitochondrial mRNA modification"/>
    <property type="evidence" value="ECO:0000315"/>
    <property type="project" value="UniProtKB"/>
</dbReference>
<dbReference type="GO" id="GO:0006397">
    <property type="term" value="P:mRNA processing"/>
    <property type="evidence" value="ECO:0007669"/>
    <property type="project" value="UniProtKB-KW"/>
</dbReference>
<dbReference type="FunFam" id="1.25.40.10:FF:001201">
    <property type="entry name" value="Pentatricopeptide repeat-containing protein OGR1, mitochondrial"/>
    <property type="match status" value="1"/>
</dbReference>
<dbReference type="FunFam" id="1.25.40.10:FF:000277">
    <property type="entry name" value="Pentatricopeptide repeat-containing protein, mitochondrial"/>
    <property type="match status" value="1"/>
</dbReference>
<dbReference type="Gene3D" id="1.25.40.10">
    <property type="entry name" value="Tetratricopeptide repeat domain"/>
    <property type="match status" value="2"/>
</dbReference>
<dbReference type="InterPro" id="IPR032867">
    <property type="entry name" value="DYW_dom"/>
</dbReference>
<dbReference type="InterPro" id="IPR046848">
    <property type="entry name" value="E_motif"/>
</dbReference>
<dbReference type="InterPro" id="IPR002885">
    <property type="entry name" value="Pentatricopeptide_rpt"/>
</dbReference>
<dbReference type="InterPro" id="IPR046960">
    <property type="entry name" value="PPR_At4g14850-like_plant"/>
</dbReference>
<dbReference type="InterPro" id="IPR011990">
    <property type="entry name" value="TPR-like_helical_dom_sf"/>
</dbReference>
<dbReference type="NCBIfam" id="TIGR00756">
    <property type="entry name" value="PPR"/>
    <property type="match status" value="4"/>
</dbReference>
<dbReference type="PANTHER" id="PTHR47926:SF408">
    <property type="entry name" value="DYW DOMAIN-CONTAINING PROTEIN"/>
    <property type="match status" value="1"/>
</dbReference>
<dbReference type="PANTHER" id="PTHR47926">
    <property type="entry name" value="PENTATRICOPEPTIDE REPEAT-CONTAINING PROTEIN"/>
    <property type="match status" value="1"/>
</dbReference>
<dbReference type="Pfam" id="PF14432">
    <property type="entry name" value="DYW_deaminase"/>
    <property type="match status" value="1"/>
</dbReference>
<dbReference type="Pfam" id="PF20431">
    <property type="entry name" value="E_motif"/>
    <property type="match status" value="1"/>
</dbReference>
<dbReference type="Pfam" id="PF01535">
    <property type="entry name" value="PPR"/>
    <property type="match status" value="2"/>
</dbReference>
<dbReference type="Pfam" id="PF12854">
    <property type="entry name" value="PPR_1"/>
    <property type="match status" value="1"/>
</dbReference>
<dbReference type="Pfam" id="PF13041">
    <property type="entry name" value="PPR_2"/>
    <property type="match status" value="1"/>
</dbReference>
<dbReference type="PROSITE" id="PS51375">
    <property type="entry name" value="PPR"/>
    <property type="match status" value="7"/>
</dbReference>
<sequence length="587" mass="64618">MSVSAAARHLESLLPRLASLRHYLQFHARLLTSGHLGAHPGLRARFLDRLALSPHPAALPHALLLLRSLPTPATNDLNAALRGLAASPHPARSLLLLAGRLLPALLPRPDALSLSFALKASARCSDAHTTVQLHALVLRLGVAADVRLLTTLLDSYAKCGDLASARKVFDEMTVRDVATWNSLLAGLAQGTEPNLALALFHRLANSFQELPSREEPNEVTIVAALSACAQIGLLKDGMYVHEFAKRFGLDRNVRVCNSLIDMYSKCGSLSRALDVFHSIKPEDQTLVSYNAAIQAHSMHGHGGDALRLFDEMPTRIEPDGVTYLAVLCGCNHSGLVDDGLRVFNSMRVAPNMKHYGTIVDLLGRAGRLTEAYDTVISMPFPADIVLWQTLLGAAKMHGVVELAELAANKLAELGSNVDGDYVLLSNVYASKARWMDVGRVRDTMRSNDVRKVPGFSYTEIDGVMHKFINGDKEHPRWQEIYRALEDIVSRISELGYEPETSNVLHDIGEEEKQYALCYHSEKLAIAFGLIATPPGETLRVIKNLRICGDCHVVAKLISKAYGRVIVIRDRARFHRFEDGQCSCRDYW</sequence>
<comment type="function">
    <text evidence="4">Involved in multiple sites RNA editing events in mitochondria. Essential for C-to-U RNA editing at seven specific sites of nad2, nad4, cox2, cox3 and ccmC transcripts, all coding for proteins involved in the mitochondrial electron transport chain coupled to ATP generation. Required for normal growth and development.</text>
</comment>
<comment type="subcellular location">
    <subcellularLocation>
        <location evidence="4">Mitochondrion</location>
    </subcellularLocation>
</comment>
<comment type="disruption phenotype">
    <text>Opaque seed endosperm, late germination of seeds and plant retarded growth.</text>
</comment>
<comment type="sequence caution" evidence="6">
    <conflict type="erroneous gene model prediction">
        <sequence resource="EMBL-CDS" id="ABA97375"/>
    </conflict>
</comment>
<comment type="sequence caution" evidence="6">
    <conflict type="erroneous gene model prediction">
        <sequence resource="EMBL-CDS" id="BAF29566"/>
    </conflict>
</comment>
<gene>
    <name evidence="5" type="primary">OGR1</name>
    <name evidence="8" type="ordered locus">Os12g0270200</name>
    <name evidence="7" type="ordered locus">LOC_Os12g17080</name>
</gene>